<sequence length="242" mass="27305">MLHNPLVQFDIKKLIDIKVMDFDISFTNSAAYMLLASVLALTYFYLAFSNPRLVPSRLQISGEIIYNLVTDMLNQNVGSKGRKFVPVIFTLFVFILFCNLFGMIPYGFTVTSHIIITFALAILVFLMVTIVGFVKHGMHFLSLFLPHGTPLWLAPLMIIIELFTYLARPASLSLRLAANMMAGHILLKVIASFVVTLMIYLKFLPIPLMVILIGFEIFVAILQAYIFTILSCVYLNDAVNLH</sequence>
<gene>
    <name evidence="1" type="primary">atpB</name>
    <name type="ordered locus">RBE_1290</name>
</gene>
<reference key="1">
    <citation type="journal article" date="2006" name="PLoS Genet.">
        <title>Genome sequence of Rickettsia bellii illuminates the role of amoebae in gene exchanges between intracellular pathogens.</title>
        <authorList>
            <person name="Ogata H."/>
            <person name="La Scola B."/>
            <person name="Audic S."/>
            <person name="Renesto P."/>
            <person name="Blanc G."/>
            <person name="Robert C."/>
            <person name="Fournier P.-E."/>
            <person name="Claverie J.-M."/>
            <person name="Raoult D."/>
        </authorList>
    </citation>
    <scope>NUCLEOTIDE SEQUENCE [LARGE SCALE GENOMIC DNA]</scope>
    <source>
        <strain>RML369-C</strain>
    </source>
</reference>
<dbReference type="EMBL" id="CP000087">
    <property type="protein sequence ID" value="ABE05371.1"/>
    <property type="molecule type" value="Genomic_DNA"/>
</dbReference>
<dbReference type="RefSeq" id="WP_011477941.1">
    <property type="nucleotide sequence ID" value="NC_007940.1"/>
</dbReference>
<dbReference type="SMR" id="Q1RGZ3"/>
<dbReference type="KEGG" id="rbe:RBE_1290"/>
<dbReference type="eggNOG" id="COG0356">
    <property type="taxonomic scope" value="Bacteria"/>
</dbReference>
<dbReference type="HOGENOM" id="CLU_041018_0_2_5"/>
<dbReference type="OrthoDB" id="9809130at2"/>
<dbReference type="Proteomes" id="UP000001951">
    <property type="component" value="Chromosome"/>
</dbReference>
<dbReference type="GO" id="GO:0005886">
    <property type="term" value="C:plasma membrane"/>
    <property type="evidence" value="ECO:0007669"/>
    <property type="project" value="UniProtKB-SubCell"/>
</dbReference>
<dbReference type="GO" id="GO:0045259">
    <property type="term" value="C:proton-transporting ATP synthase complex"/>
    <property type="evidence" value="ECO:0007669"/>
    <property type="project" value="UniProtKB-KW"/>
</dbReference>
<dbReference type="GO" id="GO:0046933">
    <property type="term" value="F:proton-transporting ATP synthase activity, rotational mechanism"/>
    <property type="evidence" value="ECO:0007669"/>
    <property type="project" value="UniProtKB-UniRule"/>
</dbReference>
<dbReference type="CDD" id="cd00310">
    <property type="entry name" value="ATP-synt_Fo_a_6"/>
    <property type="match status" value="1"/>
</dbReference>
<dbReference type="FunFam" id="1.20.120.220:FF:000003">
    <property type="entry name" value="ATP synthase subunit a"/>
    <property type="match status" value="1"/>
</dbReference>
<dbReference type="Gene3D" id="1.20.120.220">
    <property type="entry name" value="ATP synthase, F0 complex, subunit A"/>
    <property type="match status" value="1"/>
</dbReference>
<dbReference type="HAMAP" id="MF_01393">
    <property type="entry name" value="ATP_synth_a_bact"/>
    <property type="match status" value="1"/>
</dbReference>
<dbReference type="InterPro" id="IPR000568">
    <property type="entry name" value="ATP_synth_F0_asu"/>
</dbReference>
<dbReference type="InterPro" id="IPR023011">
    <property type="entry name" value="ATP_synth_F0_asu_AS"/>
</dbReference>
<dbReference type="InterPro" id="IPR045083">
    <property type="entry name" value="ATP_synth_F0_asu_bact/mt"/>
</dbReference>
<dbReference type="InterPro" id="IPR035908">
    <property type="entry name" value="F0_ATP_A_sf"/>
</dbReference>
<dbReference type="NCBIfam" id="TIGR01131">
    <property type="entry name" value="ATP_synt_6_or_A"/>
    <property type="match status" value="1"/>
</dbReference>
<dbReference type="NCBIfam" id="NF004482">
    <property type="entry name" value="PRK05815.2-4"/>
    <property type="match status" value="1"/>
</dbReference>
<dbReference type="PANTHER" id="PTHR11410">
    <property type="entry name" value="ATP SYNTHASE SUBUNIT A"/>
    <property type="match status" value="1"/>
</dbReference>
<dbReference type="PANTHER" id="PTHR11410:SF0">
    <property type="entry name" value="ATP SYNTHASE SUBUNIT A"/>
    <property type="match status" value="1"/>
</dbReference>
<dbReference type="Pfam" id="PF00119">
    <property type="entry name" value="ATP-synt_A"/>
    <property type="match status" value="1"/>
</dbReference>
<dbReference type="PRINTS" id="PR00123">
    <property type="entry name" value="ATPASEA"/>
</dbReference>
<dbReference type="SUPFAM" id="SSF81336">
    <property type="entry name" value="F1F0 ATP synthase subunit A"/>
    <property type="match status" value="1"/>
</dbReference>
<dbReference type="PROSITE" id="PS00449">
    <property type="entry name" value="ATPASE_A"/>
    <property type="match status" value="1"/>
</dbReference>
<evidence type="ECO:0000255" key="1">
    <source>
        <dbReference type="HAMAP-Rule" id="MF_01393"/>
    </source>
</evidence>
<proteinExistence type="inferred from homology"/>
<organism>
    <name type="scientific">Rickettsia bellii (strain RML369-C)</name>
    <dbReference type="NCBI Taxonomy" id="336407"/>
    <lineage>
        <taxon>Bacteria</taxon>
        <taxon>Pseudomonadati</taxon>
        <taxon>Pseudomonadota</taxon>
        <taxon>Alphaproteobacteria</taxon>
        <taxon>Rickettsiales</taxon>
        <taxon>Rickettsiaceae</taxon>
        <taxon>Rickettsieae</taxon>
        <taxon>Rickettsia</taxon>
        <taxon>belli group</taxon>
    </lineage>
</organism>
<comment type="function">
    <text evidence="1">Key component of the proton channel; it plays a direct role in the translocation of protons across the membrane.</text>
</comment>
<comment type="subunit">
    <text evidence="1">F-type ATPases have 2 components, CF(1) - the catalytic core - and CF(0) - the membrane proton channel. CF(1) has five subunits: alpha(3), beta(3), gamma(1), delta(1), epsilon(1). CF(0) has three main subunits: a(1), b(2) and c(9-12). The alpha and beta chains form an alternating ring which encloses part of the gamma chain. CF(1) is attached to CF(0) by a central stalk formed by the gamma and epsilon chains, while a peripheral stalk is formed by the delta and b chains.</text>
</comment>
<comment type="subcellular location">
    <subcellularLocation>
        <location evidence="1">Cell inner membrane</location>
        <topology evidence="1">Multi-pass membrane protein</topology>
    </subcellularLocation>
</comment>
<comment type="similarity">
    <text evidence="1">Belongs to the ATPase A chain family.</text>
</comment>
<keyword id="KW-0066">ATP synthesis</keyword>
<keyword id="KW-0997">Cell inner membrane</keyword>
<keyword id="KW-1003">Cell membrane</keyword>
<keyword id="KW-0138">CF(0)</keyword>
<keyword id="KW-0375">Hydrogen ion transport</keyword>
<keyword id="KW-0406">Ion transport</keyword>
<keyword id="KW-0472">Membrane</keyword>
<keyword id="KW-0812">Transmembrane</keyword>
<keyword id="KW-1133">Transmembrane helix</keyword>
<keyword id="KW-0813">Transport</keyword>
<name>ATP6_RICBR</name>
<feature type="chain" id="PRO_0000288663" description="ATP synthase subunit a">
    <location>
        <begin position="1"/>
        <end position="242"/>
    </location>
</feature>
<feature type="transmembrane region" description="Helical" evidence="1">
    <location>
        <begin position="29"/>
        <end position="49"/>
    </location>
</feature>
<feature type="transmembrane region" description="Helical" evidence="1">
    <location>
        <begin position="84"/>
        <end position="104"/>
    </location>
</feature>
<feature type="transmembrane region" description="Helical" evidence="1">
    <location>
        <begin position="114"/>
        <end position="134"/>
    </location>
</feature>
<feature type="transmembrane region" description="Helical" evidence="1">
    <location>
        <begin position="140"/>
        <end position="160"/>
    </location>
</feature>
<feature type="transmembrane region" description="Helical" evidence="1">
    <location>
        <begin position="189"/>
        <end position="209"/>
    </location>
</feature>
<feature type="transmembrane region" description="Helical" evidence="1">
    <location>
        <begin position="210"/>
        <end position="230"/>
    </location>
</feature>
<accession>Q1RGZ3</accession>
<protein>
    <recommendedName>
        <fullName evidence="1">ATP synthase subunit a</fullName>
    </recommendedName>
    <alternativeName>
        <fullName evidence="1">ATP synthase F0 sector subunit a</fullName>
    </alternativeName>
    <alternativeName>
        <fullName evidence="1">F-ATPase subunit 6</fullName>
    </alternativeName>
</protein>